<comment type="function">
    <text evidence="1">Component of the eukaryotic translation initiation factor 3 (eIF-3) complex, which is involved in protein synthesis of a specialized repertoire of mRNAs and, together with other initiation factors, stimulates binding of mRNA and methionyl-tRNAi to the 40S ribosome. The eIF-3 complex specifically targets and initiates translation of a subset of mRNAs involved in cell proliferation.</text>
</comment>
<comment type="subunit">
    <text evidence="1">Component of the eukaryotic translation initiation factor 3 (eIF-3) complex.</text>
</comment>
<comment type="subcellular location">
    <subcellularLocation>
        <location evidence="1">Cytoplasm</location>
    </subcellularLocation>
</comment>
<comment type="similarity">
    <text evidence="1">Belongs to the eIF-3 subunit L family.</text>
</comment>
<sequence length="520" mass="59618">MDSDEEFIDNSLAVGDIVYDEAQIAQQQQEYAAQLKLASTAIPTVVKDFIQYFHRCLSDNSVYELHGCYENSFGKLTDKFYKNSHWPHPVAQVAPLVKNDPVFLYFYSELYYRHLYAKLTPTPLERFESYSNYCNLFNYILNSDGPVDLELPTSWAWGIVDEFIYQYNSYWMTKEAHNSDGVAPDTWGTYSVLNVLYSLSEKTKIREQLRAIKAGLDPMDVAGPYGSRPLYKMLGYFCVIGLLRVHTLLGDFTLALKTMESIELTKKALFARVAPAHFATYYYVGICYVMTRRYADAIRCFSHVLTYMARTKNVQGPRYDAKRSEQMYALLAICVVLSPARLDDSIHVALRDRYGDQMAAMQRGDLKLFEELFTFAAPKFIQPGDVHGGDPLKHHLKIFMVDVTNTLSTANLKSYLNLYATMDLGKLASFLDTDAEDLRSQLVTLKMKNRQLRWTEGELADGTYQHCSELDIALENDLIHVAEAKGGRKFADWFIRNTVKNYSVQDYIVNGDKKDKEKKN</sequence>
<protein>
    <recommendedName>
        <fullName evidence="1">Eukaryotic translation initiation factor 3 subunit L</fullName>
        <shortName evidence="1">eIF3l</shortName>
    </recommendedName>
</protein>
<keyword id="KW-0963">Cytoplasm</keyword>
<keyword id="KW-0396">Initiation factor</keyword>
<keyword id="KW-0648">Protein biosynthesis</keyword>
<keyword id="KW-1185">Reference proteome</keyword>
<reference key="1">
    <citation type="journal article" date="2004" name="Nature">
        <title>Genome evolution in yeasts.</title>
        <authorList>
            <person name="Dujon B."/>
            <person name="Sherman D."/>
            <person name="Fischer G."/>
            <person name="Durrens P."/>
            <person name="Casaregola S."/>
            <person name="Lafontaine I."/>
            <person name="de Montigny J."/>
            <person name="Marck C."/>
            <person name="Neuveglise C."/>
            <person name="Talla E."/>
            <person name="Goffard N."/>
            <person name="Frangeul L."/>
            <person name="Aigle M."/>
            <person name="Anthouard V."/>
            <person name="Babour A."/>
            <person name="Barbe V."/>
            <person name="Barnay S."/>
            <person name="Blanchin S."/>
            <person name="Beckerich J.-M."/>
            <person name="Beyne E."/>
            <person name="Bleykasten C."/>
            <person name="Boisrame A."/>
            <person name="Boyer J."/>
            <person name="Cattolico L."/>
            <person name="Confanioleri F."/>
            <person name="de Daruvar A."/>
            <person name="Despons L."/>
            <person name="Fabre E."/>
            <person name="Fairhead C."/>
            <person name="Ferry-Dumazet H."/>
            <person name="Groppi A."/>
            <person name="Hantraye F."/>
            <person name="Hennequin C."/>
            <person name="Jauniaux N."/>
            <person name="Joyet P."/>
            <person name="Kachouri R."/>
            <person name="Kerrest A."/>
            <person name="Koszul R."/>
            <person name="Lemaire M."/>
            <person name="Lesur I."/>
            <person name="Ma L."/>
            <person name="Muller H."/>
            <person name="Nicaud J.-M."/>
            <person name="Nikolski M."/>
            <person name="Oztas S."/>
            <person name="Ozier-Kalogeropoulos O."/>
            <person name="Pellenz S."/>
            <person name="Potier S."/>
            <person name="Richard G.-F."/>
            <person name="Straub M.-L."/>
            <person name="Suleau A."/>
            <person name="Swennen D."/>
            <person name="Tekaia F."/>
            <person name="Wesolowski-Louvel M."/>
            <person name="Westhof E."/>
            <person name="Wirth B."/>
            <person name="Zeniou-Meyer M."/>
            <person name="Zivanovic Y."/>
            <person name="Bolotin-Fukuhara M."/>
            <person name="Thierry A."/>
            <person name="Bouchier C."/>
            <person name="Caudron B."/>
            <person name="Scarpelli C."/>
            <person name="Gaillardin C."/>
            <person name="Weissenbach J."/>
            <person name="Wincker P."/>
            <person name="Souciet J.-L."/>
        </authorList>
    </citation>
    <scope>NUCLEOTIDE SEQUENCE [LARGE SCALE GENOMIC DNA]</scope>
    <source>
        <strain>CLIB 122 / E 150</strain>
    </source>
</reference>
<feature type="chain" id="PRO_0000364271" description="Eukaryotic translation initiation factor 3 subunit L">
    <location>
        <begin position="1"/>
        <end position="520"/>
    </location>
</feature>
<feature type="domain" description="PCI" evidence="2">
    <location>
        <begin position="278"/>
        <end position="478"/>
    </location>
</feature>
<dbReference type="EMBL" id="CR382130">
    <property type="protein sequence ID" value="CAG80551.1"/>
    <property type="molecule type" value="Genomic_DNA"/>
</dbReference>
<dbReference type="RefSeq" id="XP_502363.1">
    <property type="nucleotide sequence ID" value="XM_502363.1"/>
</dbReference>
<dbReference type="SMR" id="Q6CAE9"/>
<dbReference type="STRING" id="284591.Q6CAE9"/>
<dbReference type="EnsemblFungi" id="CAG80551">
    <property type="protein sequence ID" value="CAG80551"/>
    <property type="gene ID" value="YALI0_D03399g"/>
</dbReference>
<dbReference type="KEGG" id="yli:2910573"/>
<dbReference type="VEuPathDB" id="FungiDB:YALI0_D03399g"/>
<dbReference type="HOGENOM" id="CLU_029210_0_1_1"/>
<dbReference type="InParanoid" id="Q6CAE9"/>
<dbReference type="OMA" id="AGWFIRN"/>
<dbReference type="OrthoDB" id="103526at4891"/>
<dbReference type="Proteomes" id="UP000001300">
    <property type="component" value="Chromosome D"/>
</dbReference>
<dbReference type="GO" id="GO:0016282">
    <property type="term" value="C:eukaryotic 43S preinitiation complex"/>
    <property type="evidence" value="ECO:0007669"/>
    <property type="project" value="UniProtKB-UniRule"/>
</dbReference>
<dbReference type="GO" id="GO:0033290">
    <property type="term" value="C:eukaryotic 48S preinitiation complex"/>
    <property type="evidence" value="ECO:0007669"/>
    <property type="project" value="UniProtKB-UniRule"/>
</dbReference>
<dbReference type="GO" id="GO:0005852">
    <property type="term" value="C:eukaryotic translation initiation factor 3 complex"/>
    <property type="evidence" value="ECO:0000318"/>
    <property type="project" value="GO_Central"/>
</dbReference>
<dbReference type="GO" id="GO:0003743">
    <property type="term" value="F:translation initiation factor activity"/>
    <property type="evidence" value="ECO:0007669"/>
    <property type="project" value="UniProtKB-UniRule"/>
</dbReference>
<dbReference type="GO" id="GO:0001732">
    <property type="term" value="P:formation of cytoplasmic translation initiation complex"/>
    <property type="evidence" value="ECO:0007669"/>
    <property type="project" value="UniProtKB-UniRule"/>
</dbReference>
<dbReference type="GO" id="GO:0006413">
    <property type="term" value="P:translational initiation"/>
    <property type="evidence" value="ECO:0000318"/>
    <property type="project" value="GO_Central"/>
</dbReference>
<dbReference type="HAMAP" id="MF_03011">
    <property type="entry name" value="eIF3l"/>
    <property type="match status" value="1"/>
</dbReference>
<dbReference type="InterPro" id="IPR019382">
    <property type="entry name" value="eIF3l"/>
</dbReference>
<dbReference type="InterPro" id="IPR000717">
    <property type="entry name" value="PCI_dom"/>
</dbReference>
<dbReference type="InterPro" id="IPR011990">
    <property type="entry name" value="TPR-like_helical_dom_sf"/>
</dbReference>
<dbReference type="PANTHER" id="PTHR13242">
    <property type="entry name" value="EUKARYOTIC TRANSLATION INITIATION FACTOR 3"/>
    <property type="match status" value="1"/>
</dbReference>
<dbReference type="PANTHER" id="PTHR13242:SF0">
    <property type="entry name" value="EUKARYOTIC TRANSLATION INITIATION FACTOR 3 SUBUNIT L"/>
    <property type="match status" value="1"/>
</dbReference>
<dbReference type="Pfam" id="PF10255">
    <property type="entry name" value="Paf67"/>
    <property type="match status" value="1"/>
</dbReference>
<dbReference type="SUPFAM" id="SSF48452">
    <property type="entry name" value="TPR-like"/>
    <property type="match status" value="1"/>
</dbReference>
<dbReference type="PROSITE" id="PS50250">
    <property type="entry name" value="PCI"/>
    <property type="match status" value="1"/>
</dbReference>
<gene>
    <name type="ordered locus">YALI0D03399g</name>
</gene>
<name>EIF3L_YARLI</name>
<accession>Q6CAE9</accession>
<organism>
    <name type="scientific">Yarrowia lipolytica (strain CLIB 122 / E 150)</name>
    <name type="common">Yeast</name>
    <name type="synonym">Candida lipolytica</name>
    <dbReference type="NCBI Taxonomy" id="284591"/>
    <lineage>
        <taxon>Eukaryota</taxon>
        <taxon>Fungi</taxon>
        <taxon>Dikarya</taxon>
        <taxon>Ascomycota</taxon>
        <taxon>Saccharomycotina</taxon>
        <taxon>Dipodascomycetes</taxon>
        <taxon>Dipodascales</taxon>
        <taxon>Dipodascales incertae sedis</taxon>
        <taxon>Yarrowia</taxon>
    </lineage>
</organism>
<proteinExistence type="inferred from homology"/>
<evidence type="ECO:0000255" key="1">
    <source>
        <dbReference type="HAMAP-Rule" id="MF_03011"/>
    </source>
</evidence>
<evidence type="ECO:0000255" key="2">
    <source>
        <dbReference type="PROSITE-ProRule" id="PRU01185"/>
    </source>
</evidence>